<accession>A0A509AQ20</accession>
<feature type="signal peptide" evidence="1">
    <location>
        <begin position="1"/>
        <end position="22"/>
    </location>
</feature>
<feature type="chain" id="PRO_5021344374" description="Serine/threonine-protein phosphatase UIS2" evidence="1">
    <location>
        <begin position="23"/>
        <end position="1322"/>
    </location>
</feature>
<feature type="region of interest" description="Interaction with phosphorylated eIF2alpha" evidence="3">
    <location>
        <begin position="1"/>
        <end position="535"/>
    </location>
</feature>
<feature type="region of interest" description="Disordered" evidence="2">
    <location>
        <begin position="267"/>
        <end position="326"/>
    </location>
</feature>
<feature type="region of interest" description="Disordered" evidence="2">
    <location>
        <begin position="613"/>
        <end position="646"/>
    </location>
</feature>
<feature type="region of interest" description="Disordered" evidence="2">
    <location>
        <begin position="1066"/>
        <end position="1087"/>
    </location>
</feature>
<feature type="region of interest" description="Disordered" evidence="2">
    <location>
        <begin position="1170"/>
        <end position="1196"/>
    </location>
</feature>
<feature type="compositionally biased region" description="Basic and acidic residues" evidence="2">
    <location>
        <begin position="267"/>
        <end position="279"/>
    </location>
</feature>
<feature type="compositionally biased region" description="Basic and acidic residues" evidence="2">
    <location>
        <begin position="288"/>
        <end position="326"/>
    </location>
</feature>
<feature type="compositionally biased region" description="Low complexity" evidence="2">
    <location>
        <begin position="631"/>
        <end position="646"/>
    </location>
</feature>
<evidence type="ECO:0000255" key="1"/>
<evidence type="ECO:0000256" key="2">
    <source>
        <dbReference type="SAM" id="MobiDB-lite"/>
    </source>
</evidence>
<evidence type="ECO:0000269" key="3">
    <source>
    </source>
</evidence>
<evidence type="ECO:0000303" key="4">
    <source>
    </source>
</evidence>
<evidence type="ECO:0000305" key="5"/>
<evidence type="ECO:0000312" key="6">
    <source>
        <dbReference type="EMBL" id="VUC57666.1"/>
    </source>
</evidence>
<evidence type="ECO:0000312" key="7">
    <source>
        <dbReference type="Proteomes" id="UP000074855"/>
    </source>
</evidence>
<sequence>MNISKFFLIFIPLVLFKYPANNELINYNVILKYDVKDLFKRVLQEQNEDIKDDNDENDEGDEEDEYYSYLKNRGTNEFDKVKYKYAEYVRFSIFKSKNIYTHIFNELLVFLGAQYGTEEEIVVHVKLIDILSLLFTHYKDNLSKFGHILNSFQDRSKLMNSVENEFMNEFINERDNYIYDVKNAYNKSDNNDDEWIETVLNKKNMLYDKFLKEWRIDGSNFYSIHNKKKTYLPKKVFQNKQNYIPDFENMEHVDLVCKPISDSAIDEKSAEKYEDKELNINEQNEQSNSKKEQTGNDNVSETKMHKEESSDSSNKTDESNVCKSENKYIKKTNNNKKIKEERHGFIYKMRNDFFLSDASLNVISLINSITSNEENKIVKKLYTGLKKLKITTFDNLIRYTNIIGIFFSYDIFDELYLQIKLIKEYFGLIPRNNDELSIVSKSKNVSKIKVYGKYNITDDEMFVPPVCLSAYCKLRSVWMQNRDFNFKIEKYSSNSINFMTLGDIGRGFKKENSYDEEQMLKLIGFNELKSTSNAMKDWHASNNADFVINLGDNVPEVDELDYLKNFEWHKIMRELFTFRKQDEDEEKNDADSYSITKDNIQEFYKEVEKQMNNTNTDDKNQHNDISTTPINNYTDGNEGNNNSENNNGFREYINDNTKDYNIYKNETTEKEETYDSIPFFSIFGEKDYFYFPSEQIQEHYAKRIPGYFFPNNYYRINYDFVYNNKEKNGVQEKFKASFIFIDTWSLMIGFPIIRNYRSFREQFNWINKALLESAKESDWIFVVGHHPFISSGRRSDNYSFEELSFHNIIRNFFFYYNIDGYFSAHDNLMEYLNFGPLNLFVNGSSSRVLFDKSTILGRGYFGKMVGSIYPVTCYLLTTIHSALRPKGCDISKYSKWSNKYDIGFSAHKLSKDELVTEFINSRSGKPVSQKIVIKNKKDKRRKFYDLDGYTNDKIKQFENKIYEFSSKNPNFIKYKIEEFKENDKKLNIIMNNLKSEEEKDAFRSLMFLNNLIFGISSHISNISFDQLKLMCYLANKYRTFFNKKLIKFLGEELKIAVQKMEVKTTNETPHNSNEILNTNENESIQPNDPTMKVEQIMELIDTLGYKPDEFLEKYDAMTQEEKDALKEKLGNDVSLEDYLSKVKMYIHKKKLSAEELKEYEENEENIKIAEVPDESKEDDNTNSQPEDTIDQENKDDINDIINAPNEVHKNYKELVEKEKKLTENEHALLMLSSLKTYDEMKYSLNILSKKEVIKEEAHPYGLYYIEKHKTFFQVSLELCPDIKRIISNLGKVGTKLAFYDYINNLYNKIMDLKNSIDKIAIF</sequence>
<gene>
    <name evidence="4" type="primary">UIS2</name>
    <name evidence="6" type="ORF">PBANKA_1328000</name>
</gene>
<protein>
    <recommendedName>
        <fullName evidence="4">Serine/threonine-protein phosphatase UIS2</fullName>
    </recommendedName>
    <alternativeName>
        <fullName evidence="4">Up-regulated in infective sporozoite protein 2</fullName>
        <ecNumber evidence="3">3.1.3.16</ecNumber>
    </alternativeName>
</protein>
<keyword id="KW-0378">Hydrolase</keyword>
<keyword id="KW-0464">Manganese</keyword>
<keyword id="KW-0479">Metal-binding</keyword>
<keyword id="KW-1185">Reference proteome</keyword>
<keyword id="KW-0732">Signal</keyword>
<proteinExistence type="evidence at protein level"/>
<reference evidence="7" key="1">
    <citation type="journal article" date="2014" name="BMC Biol.">
        <title>A comprehensive evaluation of rodent malaria parasite genomes and gene expression.</title>
        <authorList>
            <person name="Otto T.D."/>
            <person name="Bohme U."/>
            <person name="Jackson A.P."/>
            <person name="Hunt M."/>
            <person name="Franke-Fayard B."/>
            <person name="Hoeijmakers W.A."/>
            <person name="Religa A.A."/>
            <person name="Robertson L."/>
            <person name="Sanders M."/>
            <person name="Ogun S.A."/>
            <person name="Cunningham D."/>
            <person name="Erhart A."/>
            <person name="Billker O."/>
            <person name="Khan S.M."/>
            <person name="Stunnenberg H.G."/>
            <person name="Langhorne J."/>
            <person name="Holder A.A."/>
            <person name="Waters A.P."/>
            <person name="Newbold C.I."/>
            <person name="Pain A."/>
            <person name="Berriman M."/>
            <person name="Janse C.J."/>
        </authorList>
    </citation>
    <scope>NUCLEOTIDE SEQUENCE [LARGE SCALE GENOMIC DNA]</scope>
    <source>
        <strain evidence="7">ANKA</strain>
    </source>
</reference>
<reference evidence="5" key="2">
    <citation type="journal article" date="2016" name="PLoS Pathog.">
        <title>UIS2: A Unique Phosphatase Required for the Development of Plasmodium Liver Stages.</title>
        <authorList>
            <person name="Zhang M."/>
            <person name="Mishra S."/>
            <person name="Sakthivel R."/>
            <person name="Fontoura B.M."/>
            <person name="Nussenzweig V."/>
        </authorList>
    </citation>
    <scope>FUNCTION</scope>
    <scope>CATALYTIC ACTIVITY</scope>
    <scope>COFACTOR</scope>
    <scope>DEVELOPMENTAL STAGE</scope>
    <scope>DISRUPTION PHENOTYPE</scope>
</reference>
<dbReference type="EC" id="3.1.3.16" evidence="3"/>
<dbReference type="EMBL" id="LK023128">
    <property type="protein sequence ID" value="VUC57666.1"/>
    <property type="molecule type" value="Genomic_DNA"/>
</dbReference>
<dbReference type="FunCoup" id="A0A509AQ20">
    <property type="interactions" value="683"/>
</dbReference>
<dbReference type="STRING" id="5823.A0A509AQ20"/>
<dbReference type="VEuPathDB" id="PlasmoDB:PBANKA_1328000"/>
<dbReference type="InParanoid" id="A0A509AQ20"/>
<dbReference type="OMA" id="LVRYTNI"/>
<dbReference type="Proteomes" id="UP000074855">
    <property type="component" value="Chromosome 13"/>
</dbReference>
<dbReference type="GO" id="GO:0046872">
    <property type="term" value="F:metal ion binding"/>
    <property type="evidence" value="ECO:0007669"/>
    <property type="project" value="UniProtKB-KW"/>
</dbReference>
<dbReference type="GO" id="GO:0004722">
    <property type="term" value="F:protein serine/threonine phosphatase activity"/>
    <property type="evidence" value="ECO:0000314"/>
    <property type="project" value="UniProtKB"/>
</dbReference>
<dbReference type="GO" id="GO:0070262">
    <property type="term" value="P:peptidyl-serine dephosphorylation"/>
    <property type="evidence" value="ECO:0000314"/>
    <property type="project" value="UniProtKB"/>
</dbReference>
<dbReference type="Gene3D" id="3.60.21.10">
    <property type="match status" value="2"/>
</dbReference>
<dbReference type="InterPro" id="IPR029052">
    <property type="entry name" value="Metallo-depent_PP-like"/>
</dbReference>
<dbReference type="InterPro" id="IPR051558">
    <property type="entry name" value="Metallophosphoesterase_PAP"/>
</dbReference>
<dbReference type="PANTHER" id="PTHR10161">
    <property type="entry name" value="TARTRATE-RESISTANT ACID PHOSPHATASE TYPE 5"/>
    <property type="match status" value="1"/>
</dbReference>
<dbReference type="PANTHER" id="PTHR10161:SF14">
    <property type="entry name" value="TARTRATE-RESISTANT ACID PHOSPHATASE TYPE 5"/>
    <property type="match status" value="1"/>
</dbReference>
<dbReference type="SUPFAM" id="SSF56300">
    <property type="entry name" value="Metallo-dependent phosphatases"/>
    <property type="match status" value="1"/>
</dbReference>
<comment type="function">
    <text evidence="3">Protein phosphatase which dephosphorylates 'Ser-59' of translation factor eIF2alpha during the liver stage, thus enabling protein translation.</text>
</comment>
<comment type="catalytic activity">
    <reaction evidence="3">
        <text>O-phospho-L-seryl-[protein] + H2O = L-seryl-[protein] + phosphate</text>
        <dbReference type="Rhea" id="RHEA:20629"/>
        <dbReference type="Rhea" id="RHEA-COMP:9863"/>
        <dbReference type="Rhea" id="RHEA-COMP:11604"/>
        <dbReference type="ChEBI" id="CHEBI:15377"/>
        <dbReference type="ChEBI" id="CHEBI:29999"/>
        <dbReference type="ChEBI" id="CHEBI:43474"/>
        <dbReference type="ChEBI" id="CHEBI:83421"/>
        <dbReference type="EC" id="3.1.3.16"/>
    </reaction>
</comment>
<comment type="cofactor">
    <cofactor evidence="3">
        <name>Mn(2+)</name>
        <dbReference type="ChEBI" id="CHEBI:29035"/>
    </cofactor>
    <text evidence="3">Has weak activity in the presence of Mg(2+).</text>
</comment>
<comment type="developmental stage">
    <text evidence="3">Expressed during the host liver stage and to a lesser extent in salivary gland sporozoites (at protein level) (PubMed:26735921). Highly expressed in salivary gland sporozoites (PubMed:26735921). Expressed at lower levels during the liver, asexual blood stage and in gametocytes (PubMed:26735921).</text>
</comment>
<comment type="disruption phenotype">
    <text evidence="3">Conditional knockout during the mosquito midgut stage causes no defect in the parasite development with normal production of sporozoites (PubMed:26735921). In sporozoites, phosphorylation of eIF2alpha is enhanced (PubMed:26735921). No defect in host hepatocyte infection, however, sporozoite development in the liver is impaired causing a reduction in the number of exo-erythrocytic forms (EEFs) produced (PubMed:26735921).</text>
</comment>
<comment type="caution">
    <text evidence="4 5">The protein phosphatase family which UIS2 belongs to is unclear. Due to its cofactor requirements, it is thought to belong to the PP2C family, however, the protein lacks the canonical PP2C catalytic domain features (PubMed:26735921). Appears to show high similarity to purple acid phosphatases.</text>
</comment>
<organism evidence="7">
    <name type="scientific">Plasmodium berghei (strain Anka)</name>
    <dbReference type="NCBI Taxonomy" id="5823"/>
    <lineage>
        <taxon>Eukaryota</taxon>
        <taxon>Sar</taxon>
        <taxon>Alveolata</taxon>
        <taxon>Apicomplexa</taxon>
        <taxon>Aconoidasida</taxon>
        <taxon>Haemosporida</taxon>
        <taxon>Plasmodiidae</taxon>
        <taxon>Plasmodium</taxon>
        <taxon>Plasmodium (Vinckeia)</taxon>
    </lineage>
</organism>
<name>UIS2_PLABA</name>